<proteinExistence type="evidence at protein level"/>
<sequence>MSHSSGTDMALNFSTASLHAWNGVSLLLIIFVTWIISGMSQAKSKIERLLICWWALTGLIHVFQEGYYVFTPDLFNDNSPNFMAEIWKEYSKGDSRYATRHTSVLGIESVASIVLGPLSLLAAYAVAKQKSYRYIFQFAISIAQLYGTIQYFLTAFLEGDNFASSRYYYYSYYVGQSSIWVIVPMLIATRYWIKIHAICKRLQDKKVTKVG</sequence>
<organism>
    <name type="scientific">Citrus sinensis</name>
    <name type="common">Sweet orange</name>
    <name type="synonym">Citrus aurantium var. sinensis</name>
    <dbReference type="NCBI Taxonomy" id="2711"/>
    <lineage>
        <taxon>Eukaryota</taxon>
        <taxon>Viridiplantae</taxon>
        <taxon>Streptophyta</taxon>
        <taxon>Embryophyta</taxon>
        <taxon>Tracheophyta</taxon>
        <taxon>Spermatophyta</taxon>
        <taxon>Magnoliopsida</taxon>
        <taxon>eudicotyledons</taxon>
        <taxon>Gunneridae</taxon>
        <taxon>Pentapetalae</taxon>
        <taxon>rosids</taxon>
        <taxon>malvids</taxon>
        <taxon>Sapindales</taxon>
        <taxon>Rutaceae</taxon>
        <taxon>Aurantioideae</taxon>
        <taxon>Citrus</taxon>
    </lineage>
</organism>
<reference key="1">
    <citation type="journal article" date="2023" name="Science">
        <title>Complex scaffold remodeling in plant triterpene biosynthesis.</title>
        <authorList>
            <person name="De La Pena R."/>
            <person name="Hodgson H."/>
            <person name="Liu J.C."/>
            <person name="Stephenson M.J."/>
            <person name="Martin A.C."/>
            <person name="Owen C."/>
            <person name="Harkess A."/>
            <person name="Leebens-Mack J."/>
            <person name="Jimenez L.E."/>
            <person name="Osbourn A."/>
            <person name="Sattely E.S."/>
        </authorList>
    </citation>
    <scope>NUCLEOTIDE SEQUENCE [MRNA]</scope>
    <scope>FUNCTION</scope>
    <scope>CATALYTIC ACTIVITY</scope>
    <scope>PATHWAY</scope>
    <scope>TISSUE SPECIFICITY</scope>
    <source>
        <strain>cv. Valencia</strain>
    </source>
</reference>
<reference key="2">
    <citation type="submission" date="2014-04" db="EMBL/GenBank/DDBJ databases">
        <authorList>
            <consortium name="International Citrus Genome Consortium"/>
            <person name="Gmitter F."/>
            <person name="Chen C."/>
            <person name="Farmerie W."/>
            <person name="Harkins T."/>
            <person name="Desany B."/>
            <person name="Mohiuddin M."/>
            <person name="Kodira C."/>
            <person name="Borodovsky M."/>
            <person name="Lomsadze A."/>
            <person name="Burns P."/>
            <person name="Jenkins J."/>
            <person name="Prochnik S."/>
            <person name="Shu S."/>
            <person name="Chapman J."/>
            <person name="Pitluck S."/>
            <person name="Schmutz J."/>
            <person name="Rokhsar D."/>
        </authorList>
    </citation>
    <scope>NUCLEOTIDE SEQUENCE [LARGE SCALE GENOMIC DNA]</scope>
    <source>
        <strain>cv. Ridge Pineapple sweet orange</strain>
    </source>
</reference>
<dbReference type="EC" id="5.3.3.-" evidence="3"/>
<dbReference type="EMBL" id="OQ091248">
    <property type="protein sequence ID" value="WCJ12493.1"/>
    <property type="molecule type" value="mRNA"/>
</dbReference>
<dbReference type="EMBL" id="KK785591">
    <property type="protein sequence ID" value="KDO41678.1"/>
    <property type="molecule type" value="Genomic_DNA"/>
</dbReference>
<dbReference type="SMR" id="A0A067DFU5"/>
<dbReference type="STRING" id="2711.A0A067DFU5"/>
<dbReference type="PaxDb" id="2711-XP_006494542-1"/>
<dbReference type="eggNOG" id="KOG4826">
    <property type="taxonomic scope" value="Eukaryota"/>
</dbReference>
<dbReference type="UniPathway" id="UPA00213"/>
<dbReference type="Proteomes" id="UP000027120">
    <property type="component" value="Unassembled WGS sequence"/>
</dbReference>
<dbReference type="GO" id="GO:0005783">
    <property type="term" value="C:endoplasmic reticulum"/>
    <property type="evidence" value="ECO:0000318"/>
    <property type="project" value="GO_Central"/>
</dbReference>
<dbReference type="GO" id="GO:0016020">
    <property type="term" value="C:membrane"/>
    <property type="evidence" value="ECO:0007669"/>
    <property type="project" value="UniProtKB-SubCell"/>
</dbReference>
<dbReference type="GO" id="GO:0000247">
    <property type="term" value="F:C-8 sterol isomerase activity"/>
    <property type="evidence" value="ECO:0000318"/>
    <property type="project" value="GO_Central"/>
</dbReference>
<dbReference type="GO" id="GO:0047750">
    <property type="term" value="F:cholestenol delta-isomerase activity"/>
    <property type="evidence" value="ECO:0007669"/>
    <property type="project" value="InterPro"/>
</dbReference>
<dbReference type="GO" id="GO:0004769">
    <property type="term" value="F:steroid Delta-isomerase activity"/>
    <property type="evidence" value="ECO:0000318"/>
    <property type="project" value="GO_Central"/>
</dbReference>
<dbReference type="GO" id="GO:0016126">
    <property type="term" value="P:sterol biosynthetic process"/>
    <property type="evidence" value="ECO:0000318"/>
    <property type="project" value="GO_Central"/>
</dbReference>
<dbReference type="InterPro" id="IPR007905">
    <property type="entry name" value="EBP"/>
</dbReference>
<dbReference type="InterPro" id="IPR033118">
    <property type="entry name" value="EXPERA"/>
</dbReference>
<dbReference type="PANTHER" id="PTHR14207:SF0">
    <property type="entry name" value="3-BETA-HYDROXYSTEROID-DELTA(8),DELTA(7)-ISOMERASE"/>
    <property type="match status" value="1"/>
</dbReference>
<dbReference type="PANTHER" id="PTHR14207">
    <property type="entry name" value="STEROL ISOMERASE"/>
    <property type="match status" value="1"/>
</dbReference>
<dbReference type="Pfam" id="PF05241">
    <property type="entry name" value="EBP"/>
    <property type="match status" value="1"/>
</dbReference>
<dbReference type="PROSITE" id="PS51751">
    <property type="entry name" value="EXPERA"/>
    <property type="match status" value="1"/>
</dbReference>
<name>MOI1_CITSI</name>
<accession>A0A067DFU5</accession>
<evidence type="ECO:0000255" key="1"/>
<evidence type="ECO:0000255" key="2">
    <source>
        <dbReference type="PROSITE-ProRule" id="PRU01087"/>
    </source>
</evidence>
<evidence type="ECO:0000269" key="3">
    <source>
    </source>
</evidence>
<evidence type="ECO:0000303" key="4">
    <source>
    </source>
</evidence>
<evidence type="ECO:0000305" key="5"/>
<evidence type="ECO:0000312" key="6">
    <source>
        <dbReference type="EMBL" id="KDO41678.1"/>
    </source>
</evidence>
<comment type="function">
    <text evidence="3">Isomerase involved in the biosynthesis of glabretanes triterpene natural products such as glabretal, a component with in vitro antiproliferative properties on lymphocytes (PubMed:36701471). Catalyzes the conversion of 7,8-epoxymelianol to protoglabretal via skeletal rearrangements (PubMed:36701471).</text>
</comment>
<comment type="catalytic activity">
    <reaction evidence="3">
        <text>7,8-epoxymelianol = protoglabretal</text>
        <dbReference type="Rhea" id="RHEA:80299"/>
        <dbReference type="ChEBI" id="CHEBI:231452"/>
        <dbReference type="ChEBI" id="CHEBI:231454"/>
    </reaction>
    <physiologicalReaction direction="left-to-right" evidence="3">
        <dbReference type="Rhea" id="RHEA:80300"/>
    </physiologicalReaction>
</comment>
<comment type="pathway">
    <text evidence="3">Secondary metabolite biosynthesis; terpenoid biosynthesis.</text>
</comment>
<comment type="subcellular location">
    <subcellularLocation>
        <location evidence="1">Membrane</location>
        <topology evidence="1">Multi-pass membrane protein</topology>
    </subcellularLocation>
</comment>
<comment type="tissue specificity">
    <text evidence="3">Expressed in maturing fruits and in juice vesicles.</text>
</comment>
<comment type="similarity">
    <text evidence="5">Belongs to the EBP family.</text>
</comment>
<feature type="chain" id="PRO_0000461378" description="Protoglabretal synthase MOI1">
    <location>
        <begin position="1"/>
        <end position="211"/>
    </location>
</feature>
<feature type="transmembrane region" description="Helical" evidence="1">
    <location>
        <begin position="16"/>
        <end position="36"/>
    </location>
</feature>
<feature type="transmembrane region" description="Helical" evidence="1">
    <location>
        <begin position="50"/>
        <end position="70"/>
    </location>
</feature>
<feature type="transmembrane region" description="Helical" evidence="1">
    <location>
        <begin position="104"/>
        <end position="124"/>
    </location>
</feature>
<feature type="transmembrane region" description="Helical" evidence="1">
    <location>
        <begin position="135"/>
        <end position="155"/>
    </location>
</feature>
<feature type="transmembrane region" description="Helical" evidence="1">
    <location>
        <begin position="179"/>
        <end position="199"/>
    </location>
</feature>
<feature type="domain" description="EXPERA" evidence="2">
    <location>
        <begin position="46"/>
        <end position="188"/>
    </location>
</feature>
<feature type="sequence conflict" description="In Ref. 1; WCJ12493." evidence="5" ref="1">
    <original>R</original>
    <variation>S</variation>
    <location>
        <position position="133"/>
    </location>
</feature>
<gene>
    <name evidence="4" type="primary">MOI1</name>
    <name evidence="6" type="ORF">CISIN_1g028272mg</name>
</gene>
<keyword id="KW-0413">Isomerase</keyword>
<keyword id="KW-0444">Lipid biosynthesis</keyword>
<keyword id="KW-0443">Lipid metabolism</keyword>
<keyword id="KW-0472">Membrane</keyword>
<keyword id="KW-1185">Reference proteome</keyword>
<keyword id="KW-0752">Steroid biosynthesis</keyword>
<keyword id="KW-0753">Steroid metabolism</keyword>
<keyword id="KW-0756">Sterol biosynthesis</keyword>
<keyword id="KW-1207">Sterol metabolism</keyword>
<keyword id="KW-0812">Transmembrane</keyword>
<keyword id="KW-1133">Transmembrane helix</keyword>
<protein>
    <recommendedName>
        <fullName evidence="4">Protoglabretal synthase MOI1</fullName>
        <ecNumber evidence="3">5.3.3.-</ecNumber>
    </recommendedName>
    <alternativeName>
        <fullName evidence="4">Melianol oxide isomerase 1</fullName>
        <shortName evidence="4">CsMOI1</shortName>
    </alternativeName>
</protein>